<feature type="chain" id="PRO_1000198737" description="Tryptophan synthase beta chain">
    <location>
        <begin position="1"/>
        <end position="397"/>
    </location>
</feature>
<feature type="modified residue" description="N6-(pyridoxal phosphate)lysine" evidence="1">
    <location>
        <position position="91"/>
    </location>
</feature>
<dbReference type="EC" id="4.2.1.20" evidence="1"/>
<dbReference type="EMBL" id="CP001598">
    <property type="protein sequence ID" value="ACQ48801.1"/>
    <property type="molecule type" value="Genomic_DNA"/>
</dbReference>
<dbReference type="RefSeq" id="WP_001105001.1">
    <property type="nucleotide sequence ID" value="NC_012659.1"/>
</dbReference>
<dbReference type="SMR" id="C3P3U0"/>
<dbReference type="GeneID" id="45021253"/>
<dbReference type="KEGG" id="bai:BAA_1329"/>
<dbReference type="HOGENOM" id="CLU_016734_3_1_9"/>
<dbReference type="UniPathway" id="UPA00035">
    <property type="reaction ID" value="UER00044"/>
</dbReference>
<dbReference type="GO" id="GO:0005737">
    <property type="term" value="C:cytoplasm"/>
    <property type="evidence" value="ECO:0007669"/>
    <property type="project" value="TreeGrafter"/>
</dbReference>
<dbReference type="GO" id="GO:0004834">
    <property type="term" value="F:tryptophan synthase activity"/>
    <property type="evidence" value="ECO:0007669"/>
    <property type="project" value="UniProtKB-UniRule"/>
</dbReference>
<dbReference type="CDD" id="cd06446">
    <property type="entry name" value="Trp-synth_B"/>
    <property type="match status" value="1"/>
</dbReference>
<dbReference type="FunFam" id="3.40.50.1100:FF:000001">
    <property type="entry name" value="Tryptophan synthase beta chain"/>
    <property type="match status" value="1"/>
</dbReference>
<dbReference type="FunFam" id="3.40.50.1100:FF:000004">
    <property type="entry name" value="Tryptophan synthase beta chain"/>
    <property type="match status" value="1"/>
</dbReference>
<dbReference type="Gene3D" id="3.40.50.1100">
    <property type="match status" value="2"/>
</dbReference>
<dbReference type="HAMAP" id="MF_00133">
    <property type="entry name" value="Trp_synth_beta"/>
    <property type="match status" value="1"/>
</dbReference>
<dbReference type="InterPro" id="IPR006653">
    <property type="entry name" value="Trp_synth_b_CS"/>
</dbReference>
<dbReference type="InterPro" id="IPR006654">
    <property type="entry name" value="Trp_synth_beta"/>
</dbReference>
<dbReference type="InterPro" id="IPR023026">
    <property type="entry name" value="Trp_synth_beta/beta-like"/>
</dbReference>
<dbReference type="InterPro" id="IPR001926">
    <property type="entry name" value="TrpB-like_PALP"/>
</dbReference>
<dbReference type="InterPro" id="IPR036052">
    <property type="entry name" value="TrpB-like_PALP_sf"/>
</dbReference>
<dbReference type="NCBIfam" id="TIGR00263">
    <property type="entry name" value="trpB"/>
    <property type="match status" value="1"/>
</dbReference>
<dbReference type="PANTHER" id="PTHR48077:SF3">
    <property type="entry name" value="TRYPTOPHAN SYNTHASE"/>
    <property type="match status" value="1"/>
</dbReference>
<dbReference type="PANTHER" id="PTHR48077">
    <property type="entry name" value="TRYPTOPHAN SYNTHASE-RELATED"/>
    <property type="match status" value="1"/>
</dbReference>
<dbReference type="Pfam" id="PF00291">
    <property type="entry name" value="PALP"/>
    <property type="match status" value="1"/>
</dbReference>
<dbReference type="PIRSF" id="PIRSF001413">
    <property type="entry name" value="Trp_syn_beta"/>
    <property type="match status" value="1"/>
</dbReference>
<dbReference type="SUPFAM" id="SSF53686">
    <property type="entry name" value="Tryptophan synthase beta subunit-like PLP-dependent enzymes"/>
    <property type="match status" value="1"/>
</dbReference>
<dbReference type="PROSITE" id="PS00168">
    <property type="entry name" value="TRP_SYNTHASE_BETA"/>
    <property type="match status" value="1"/>
</dbReference>
<sequence>MNYAYPDEKGHYGIYGGRYVPETLMQSVLELEEAYKEAMEDEAFQKELNHYLKTYVGRETPLYFAENMTEYCGGAKIYLKREDLNHTGAHKINNTIGQALLAVRMGKKKVVAETGAGQHGVATATVCALLGLECVIFMGEEDVRRQKLNVFRMELLGAKVESVAAGSGTLKDAVNEALRYWVSHVHDTHYIMGSVLGPHPFPQIVRDFQSVIGNETKKQYEALEGKLPEAVVACIGGGSNAMGMFYPFVHDEEVALYGVEAAGKGVHTEKHAATLTKGSVGVLHGSMMYLLQNEEGQIQEAHSISAGLDYPGVGPEHSLLKDIGRVSYHSITDDEALEAFQLLTKKEGIIPALESSHAVAYALKLAPQMKEDEGLVICLSGRGDKDVESIKRYMEEV</sequence>
<evidence type="ECO:0000255" key="1">
    <source>
        <dbReference type="HAMAP-Rule" id="MF_00133"/>
    </source>
</evidence>
<comment type="function">
    <text evidence="1">The beta subunit is responsible for the synthesis of L-tryptophan from indole and L-serine.</text>
</comment>
<comment type="catalytic activity">
    <reaction evidence="1">
        <text>(1S,2R)-1-C-(indol-3-yl)glycerol 3-phosphate + L-serine = D-glyceraldehyde 3-phosphate + L-tryptophan + H2O</text>
        <dbReference type="Rhea" id="RHEA:10532"/>
        <dbReference type="ChEBI" id="CHEBI:15377"/>
        <dbReference type="ChEBI" id="CHEBI:33384"/>
        <dbReference type="ChEBI" id="CHEBI:57912"/>
        <dbReference type="ChEBI" id="CHEBI:58866"/>
        <dbReference type="ChEBI" id="CHEBI:59776"/>
        <dbReference type="EC" id="4.2.1.20"/>
    </reaction>
</comment>
<comment type="cofactor">
    <cofactor evidence="1">
        <name>pyridoxal 5'-phosphate</name>
        <dbReference type="ChEBI" id="CHEBI:597326"/>
    </cofactor>
</comment>
<comment type="pathway">
    <text evidence="1">Amino-acid biosynthesis; L-tryptophan biosynthesis; L-tryptophan from chorismate: step 5/5.</text>
</comment>
<comment type="subunit">
    <text evidence="1">Tetramer of two alpha and two beta chains.</text>
</comment>
<comment type="similarity">
    <text evidence="1">Belongs to the TrpB family.</text>
</comment>
<reference key="1">
    <citation type="submission" date="2009-04" db="EMBL/GenBank/DDBJ databases">
        <title>Genome sequence of Bacillus anthracis A0248.</title>
        <authorList>
            <person name="Dodson R.J."/>
            <person name="Munk A.C."/>
            <person name="Bruce D."/>
            <person name="Detter C."/>
            <person name="Tapia R."/>
            <person name="Sutton G."/>
            <person name="Sims D."/>
            <person name="Brettin T."/>
        </authorList>
    </citation>
    <scope>NUCLEOTIDE SEQUENCE [LARGE SCALE GENOMIC DNA]</scope>
    <source>
        <strain>A0248</strain>
    </source>
</reference>
<protein>
    <recommendedName>
        <fullName evidence="1">Tryptophan synthase beta chain</fullName>
        <ecNumber evidence="1">4.2.1.20</ecNumber>
    </recommendedName>
</protein>
<proteinExistence type="inferred from homology"/>
<gene>
    <name evidence="1" type="primary">trpB</name>
    <name type="ordered locus">BAA_1329</name>
</gene>
<organism>
    <name type="scientific">Bacillus anthracis (strain A0248)</name>
    <dbReference type="NCBI Taxonomy" id="592021"/>
    <lineage>
        <taxon>Bacteria</taxon>
        <taxon>Bacillati</taxon>
        <taxon>Bacillota</taxon>
        <taxon>Bacilli</taxon>
        <taxon>Bacillales</taxon>
        <taxon>Bacillaceae</taxon>
        <taxon>Bacillus</taxon>
        <taxon>Bacillus cereus group</taxon>
    </lineage>
</organism>
<accession>C3P3U0</accession>
<keyword id="KW-0028">Amino-acid biosynthesis</keyword>
<keyword id="KW-0057">Aromatic amino acid biosynthesis</keyword>
<keyword id="KW-0456">Lyase</keyword>
<keyword id="KW-0663">Pyridoxal phosphate</keyword>
<keyword id="KW-0822">Tryptophan biosynthesis</keyword>
<name>TRPB_BACAA</name>